<evidence type="ECO:0000250" key="1"/>
<evidence type="ECO:0000250" key="2">
    <source>
        <dbReference type="UniProtKB" id="P17980"/>
    </source>
</evidence>
<evidence type="ECO:0000255" key="3"/>
<evidence type="ECO:0000305" key="4"/>
<evidence type="ECO:0000312" key="5">
    <source>
        <dbReference type="EMBL" id="OCT83790.1"/>
    </source>
</evidence>
<evidence type="ECO:0000312" key="6">
    <source>
        <dbReference type="Proteomes" id="UP000186698"/>
    </source>
</evidence>
<protein>
    <recommendedName>
        <fullName>26S proteasome regulatory subunit 6A-A</fullName>
    </recommendedName>
    <alternativeName>
        <fullName>26S proteasome AAA-ATPase subunit RPT5-A</fullName>
    </alternativeName>
    <alternativeName>
        <fullName>Proteasome 26S subunit ATPase 3-A</fullName>
    </alternativeName>
    <alternativeName>
        <fullName>Tat-binding protein 6</fullName>
        <shortName>TBP-6</shortName>
    </alternativeName>
</protein>
<organism>
    <name type="scientific">Xenopus laevis</name>
    <name type="common">African clawed frog</name>
    <dbReference type="NCBI Taxonomy" id="8355"/>
    <lineage>
        <taxon>Eukaryota</taxon>
        <taxon>Metazoa</taxon>
        <taxon>Chordata</taxon>
        <taxon>Craniata</taxon>
        <taxon>Vertebrata</taxon>
        <taxon>Euteleostomi</taxon>
        <taxon>Amphibia</taxon>
        <taxon>Batrachia</taxon>
        <taxon>Anura</taxon>
        <taxon>Pipoidea</taxon>
        <taxon>Pipidae</taxon>
        <taxon>Xenopodinae</taxon>
        <taxon>Xenopus</taxon>
        <taxon>Xenopus</taxon>
    </lineage>
</organism>
<dbReference type="EMBL" id="BC054164">
    <property type="protein sequence ID" value="AAH54164.1"/>
    <property type="molecule type" value="mRNA"/>
</dbReference>
<dbReference type="EMBL" id="CM004472">
    <property type="protein sequence ID" value="OCT83790.1"/>
    <property type="molecule type" value="Genomic_DNA"/>
</dbReference>
<dbReference type="EMBL" id="Y10461">
    <property type="protein sequence ID" value="CAA71487.1"/>
    <property type="status" value="ALT_SEQ"/>
    <property type="molecule type" value="mRNA"/>
</dbReference>
<dbReference type="RefSeq" id="NP_001080249.1">
    <property type="nucleotide sequence ID" value="NM_001086780.1"/>
</dbReference>
<dbReference type="SMR" id="O42587"/>
<dbReference type="BioGRID" id="98183">
    <property type="interactions" value="1"/>
</dbReference>
<dbReference type="STRING" id="8355.O42587"/>
<dbReference type="PaxDb" id="8355-O42587"/>
<dbReference type="DNASU" id="379941"/>
<dbReference type="AGR" id="Xenbase:XB-GENE-17333085"/>
<dbReference type="OMA" id="NKISHEH"/>
<dbReference type="OrthoDB" id="9443236at2759"/>
<dbReference type="Proteomes" id="UP000186698">
    <property type="component" value="Unplaced"/>
</dbReference>
<dbReference type="Proteomes" id="UP000694892">
    <property type="component" value="Chromosome 4L"/>
</dbReference>
<dbReference type="Bgee" id="379941">
    <property type="expression patterns" value="Expressed in lung and 19 other cell types or tissues"/>
</dbReference>
<dbReference type="GO" id="GO:0005737">
    <property type="term" value="C:cytoplasm"/>
    <property type="evidence" value="ECO:0007669"/>
    <property type="project" value="UniProtKB-SubCell"/>
</dbReference>
<dbReference type="GO" id="GO:0005634">
    <property type="term" value="C:nucleus"/>
    <property type="evidence" value="ECO:0007669"/>
    <property type="project" value="UniProtKB-SubCell"/>
</dbReference>
<dbReference type="GO" id="GO:0022624">
    <property type="term" value="C:proteasome accessory complex"/>
    <property type="evidence" value="ECO:0000250"/>
    <property type="project" value="UniProtKB"/>
</dbReference>
<dbReference type="GO" id="GO:0008540">
    <property type="term" value="C:proteasome regulatory particle, base subcomplex"/>
    <property type="evidence" value="ECO:0000318"/>
    <property type="project" value="GO_Central"/>
</dbReference>
<dbReference type="GO" id="GO:0005524">
    <property type="term" value="F:ATP binding"/>
    <property type="evidence" value="ECO:0007669"/>
    <property type="project" value="UniProtKB-KW"/>
</dbReference>
<dbReference type="GO" id="GO:0016887">
    <property type="term" value="F:ATP hydrolysis activity"/>
    <property type="evidence" value="ECO:0007669"/>
    <property type="project" value="InterPro"/>
</dbReference>
<dbReference type="GO" id="GO:0036402">
    <property type="term" value="F:proteasome-activating activity"/>
    <property type="evidence" value="ECO:0000318"/>
    <property type="project" value="GO_Central"/>
</dbReference>
<dbReference type="GO" id="GO:0043161">
    <property type="term" value="P:proteasome-mediated ubiquitin-dependent protein catabolic process"/>
    <property type="evidence" value="ECO:0000318"/>
    <property type="project" value="GO_Central"/>
</dbReference>
<dbReference type="FunFam" id="1.10.8.60:FF:000009">
    <property type="entry name" value="26S protease regulatory subunit 6A"/>
    <property type="match status" value="1"/>
</dbReference>
<dbReference type="FunFam" id="2.40.50.140:FF:000076">
    <property type="entry name" value="26S protease regulatory subunit 6A"/>
    <property type="match status" value="1"/>
</dbReference>
<dbReference type="FunFam" id="3.40.50.300:FF:000037">
    <property type="entry name" value="26S protease regulatory subunit 6A"/>
    <property type="match status" value="1"/>
</dbReference>
<dbReference type="Gene3D" id="1.10.8.60">
    <property type="match status" value="1"/>
</dbReference>
<dbReference type="Gene3D" id="2.40.50.140">
    <property type="entry name" value="Nucleic acid-binding proteins"/>
    <property type="match status" value="1"/>
</dbReference>
<dbReference type="Gene3D" id="3.40.50.300">
    <property type="entry name" value="P-loop containing nucleotide triphosphate hydrolases"/>
    <property type="match status" value="1"/>
</dbReference>
<dbReference type="InterPro" id="IPR050221">
    <property type="entry name" value="26S_Proteasome_ATPase"/>
</dbReference>
<dbReference type="InterPro" id="IPR003593">
    <property type="entry name" value="AAA+_ATPase"/>
</dbReference>
<dbReference type="InterPro" id="IPR041569">
    <property type="entry name" value="AAA_lid_3"/>
</dbReference>
<dbReference type="InterPro" id="IPR003959">
    <property type="entry name" value="ATPase_AAA_core"/>
</dbReference>
<dbReference type="InterPro" id="IPR003960">
    <property type="entry name" value="ATPase_AAA_CS"/>
</dbReference>
<dbReference type="InterPro" id="IPR012340">
    <property type="entry name" value="NA-bd_OB-fold"/>
</dbReference>
<dbReference type="InterPro" id="IPR027417">
    <property type="entry name" value="P-loop_NTPase"/>
</dbReference>
<dbReference type="InterPro" id="IPR032501">
    <property type="entry name" value="Prot_ATP_ID_OB_2nd"/>
</dbReference>
<dbReference type="PANTHER" id="PTHR23073">
    <property type="entry name" value="26S PROTEASOME REGULATORY SUBUNIT"/>
    <property type="match status" value="1"/>
</dbReference>
<dbReference type="Pfam" id="PF00004">
    <property type="entry name" value="AAA"/>
    <property type="match status" value="1"/>
</dbReference>
<dbReference type="Pfam" id="PF17862">
    <property type="entry name" value="AAA_lid_3"/>
    <property type="match status" value="1"/>
</dbReference>
<dbReference type="Pfam" id="PF16450">
    <property type="entry name" value="Prot_ATP_ID_OB_C"/>
    <property type="match status" value="1"/>
</dbReference>
<dbReference type="SMART" id="SM00382">
    <property type="entry name" value="AAA"/>
    <property type="match status" value="1"/>
</dbReference>
<dbReference type="SUPFAM" id="SSF52540">
    <property type="entry name" value="P-loop containing nucleoside triphosphate hydrolases"/>
    <property type="match status" value="1"/>
</dbReference>
<dbReference type="PROSITE" id="PS00674">
    <property type="entry name" value="AAA"/>
    <property type="match status" value="1"/>
</dbReference>
<comment type="function">
    <text evidence="1">The 26S proteasome is involved in the ATP-dependent degradation of ubiquitinated proteins. The regulatory (or ATPase) complex confers ATP dependency and substrate specificity to the 26S complex (By similarity).</text>
</comment>
<comment type="subunit">
    <text>May form a heterodimer with a related family member.</text>
</comment>
<comment type="subcellular location">
    <subcellularLocation>
        <location evidence="4">Cytoplasm</location>
    </subcellularLocation>
    <subcellularLocation>
        <location evidence="4">Nucleus</location>
    </subcellularLocation>
</comment>
<comment type="similarity">
    <text evidence="4">Belongs to the AAA ATPase family.</text>
</comment>
<comment type="sequence caution" evidence="4">
    <conflict type="frameshift">
        <sequence resource="EMBL-CDS" id="CAA71487"/>
    </conflict>
</comment>
<comment type="sequence caution" evidence="4">
    <conflict type="miscellaneous discrepancy">
        <sequence resource="EMBL-CDS" id="CAA71487"/>
    </conflict>
    <text>Chimeric cDNA.</text>
</comment>
<proteinExistence type="evidence at transcript level"/>
<gene>
    <name evidence="2" type="primary">psmc3-a</name>
    <name evidence="2" type="synonym">tbp6</name>
    <name evidence="5" type="ORF">XELAEV_18021929mg</name>
</gene>
<feature type="chain" id="PRO_0000084701" description="26S proteasome regulatory subunit 6A-A">
    <location>
        <begin position="1"/>
        <end position="423"/>
    </location>
</feature>
<feature type="binding site" evidence="3">
    <location>
        <begin position="211"/>
        <end position="218"/>
    </location>
    <ligand>
        <name>ATP</name>
        <dbReference type="ChEBI" id="CHEBI:30616"/>
    </ligand>
</feature>
<keyword id="KW-0067">ATP-binding</keyword>
<keyword id="KW-0963">Cytoplasm</keyword>
<keyword id="KW-0547">Nucleotide-binding</keyword>
<keyword id="KW-0539">Nucleus</keyword>
<keyword id="KW-0647">Proteasome</keyword>
<keyword id="KW-1185">Reference proteome</keyword>
<name>PR6AA_XENLA</name>
<sequence length="423" mass="47397">MASIWEETEADGLGEEVLKMSTEEIIQRTRLLDSEIKIMKSEVLRVTHELQAMRDKIKENSEKIKVNKTLPYLVSNVIELLDVDPNDQEEDGANIDLDSQRKGKCAVIKTSTRQTYFLPVIGLVDAEKLKPGDLVGVNKDSYLILETLPTEYDSRVKAMEVDERPTEQYSDIGGLDKQIQELVEAIVLPMNHKEKFENLGIQPPKGVLMYGPPGTGKTLLARACAAQTKATFLKLAGPQLVQMFIGDGAKLVRDAFALAKEKAPSIIFIDELDAIGTKRFDSEKAGDREVQRTMLELLNQLDGFQPNMQVKVIAATNRVDILDPALLRSGRLDRKIEFPMPNEEARARIMQIHSRKMNVSPDVNYEELARCTDDFNGAQCKAVCVEAGMIALRRGATELTHEDYMEGILEVQAKKKANLQYYA</sequence>
<reference key="1">
    <citation type="journal article" date="2016" name="Nature">
        <title>Genome evolution in the allotetraploid frog Xenopus laevis.</title>
        <authorList>
            <person name="Session A.M."/>
            <person name="Uno Y."/>
            <person name="Kwon T."/>
            <person name="Chapman J.A."/>
            <person name="Toyoda A."/>
            <person name="Takahashi S."/>
            <person name="Fukui A."/>
            <person name="Hikosaka A."/>
            <person name="Suzuki A."/>
            <person name="Kondo M."/>
            <person name="van Heeringen S.J."/>
            <person name="Quigley I."/>
            <person name="Heinz S."/>
            <person name="Ogino H."/>
            <person name="Ochi H."/>
            <person name="Hellsten U."/>
            <person name="Lyons J.B."/>
            <person name="Simakov O."/>
            <person name="Putnam N."/>
            <person name="Stites J."/>
            <person name="Kuroki Y."/>
            <person name="Tanaka T."/>
            <person name="Michiue T."/>
            <person name="Watanabe M."/>
            <person name="Bogdanovic O."/>
            <person name="Lister R."/>
            <person name="Georgiou G."/>
            <person name="Paranjpe S.S."/>
            <person name="van Kruijsbergen I."/>
            <person name="Shu S."/>
            <person name="Carlson J."/>
            <person name="Kinoshita T."/>
            <person name="Ohta Y."/>
            <person name="Mawaribuchi S."/>
            <person name="Jenkins J."/>
            <person name="Grimwood J."/>
            <person name="Schmutz J."/>
            <person name="Mitros T."/>
            <person name="Mozaffari S.V."/>
            <person name="Suzuki Y."/>
            <person name="Haramoto Y."/>
            <person name="Yamamoto T.S."/>
            <person name="Takagi C."/>
            <person name="Heald R."/>
            <person name="Miller K."/>
            <person name="Haudenschild C."/>
            <person name="Kitzman J."/>
            <person name="Nakayama T."/>
            <person name="Izutsu Y."/>
            <person name="Robert J."/>
            <person name="Fortriede J."/>
            <person name="Burns K."/>
            <person name="Lotay V."/>
            <person name="Karimi K."/>
            <person name="Yasuoka Y."/>
            <person name="Dichmann D.S."/>
            <person name="Flajnik M.F."/>
            <person name="Houston D.W."/>
            <person name="Shendure J."/>
            <person name="DuPasquier L."/>
            <person name="Vize P.D."/>
            <person name="Zorn A.M."/>
            <person name="Ito M."/>
            <person name="Marcotte E.M."/>
            <person name="Wallingford J.B."/>
            <person name="Ito Y."/>
            <person name="Asashima M."/>
            <person name="Ueno N."/>
            <person name="Matsuda Y."/>
            <person name="Veenstra G.J."/>
            <person name="Fujiyama A."/>
            <person name="Harland R.M."/>
            <person name="Taira M."/>
            <person name="Rokhsar D.S."/>
        </authorList>
    </citation>
    <scope>NUCLEOTIDE SEQUENCE [LARGE SCALE GENOMIC DNA]</scope>
    <source>
        <strain evidence="6">J</strain>
    </source>
</reference>
<reference key="2">
    <citation type="submission" date="2003-06" db="EMBL/GenBank/DDBJ databases">
        <authorList>
            <consortium name="NIH - Xenopus Gene Collection (XGC) project"/>
        </authorList>
    </citation>
    <scope>NUCLEOTIDE SEQUENCE [LARGE SCALE MRNA]</scope>
</reference>
<reference key="3">
    <citation type="journal article" date="1997" name="Biochim. Biophys. Acta">
        <title>Members of the AAA-gene family are involved in early embryogenesis of vertebrates.</title>
        <authorList>
            <person name="Nacken W."/>
        </authorList>
    </citation>
    <scope>NUCLEOTIDE SEQUENCE [MRNA] OF 1-398</scope>
    <source>
        <tissue>Ovary</tissue>
    </source>
</reference>
<accession>O42587</accession>
<accession>Q7SZ30</accession>